<comment type="similarity">
    <text evidence="1">Belongs to the bacterial ribosomal protein bL35 family.</text>
</comment>
<gene>
    <name evidence="1" type="primary">rpmI</name>
    <name type="ordered locus">CHY_1577</name>
</gene>
<dbReference type="EMBL" id="CP000141">
    <property type="protein sequence ID" value="ABB15374.1"/>
    <property type="molecule type" value="Genomic_DNA"/>
</dbReference>
<dbReference type="RefSeq" id="WP_011344481.1">
    <property type="nucleotide sequence ID" value="NC_007503.1"/>
</dbReference>
<dbReference type="SMR" id="Q3ABS8"/>
<dbReference type="FunCoup" id="Q3ABS8">
    <property type="interactions" value="325"/>
</dbReference>
<dbReference type="STRING" id="246194.CHY_1577"/>
<dbReference type="KEGG" id="chy:CHY_1577"/>
<dbReference type="eggNOG" id="COG0291">
    <property type="taxonomic scope" value="Bacteria"/>
</dbReference>
<dbReference type="HOGENOM" id="CLU_169643_1_1_9"/>
<dbReference type="InParanoid" id="Q3ABS8"/>
<dbReference type="Proteomes" id="UP000002706">
    <property type="component" value="Chromosome"/>
</dbReference>
<dbReference type="GO" id="GO:0022625">
    <property type="term" value="C:cytosolic large ribosomal subunit"/>
    <property type="evidence" value="ECO:0007669"/>
    <property type="project" value="TreeGrafter"/>
</dbReference>
<dbReference type="GO" id="GO:0003735">
    <property type="term" value="F:structural constituent of ribosome"/>
    <property type="evidence" value="ECO:0007669"/>
    <property type="project" value="InterPro"/>
</dbReference>
<dbReference type="GO" id="GO:0006412">
    <property type="term" value="P:translation"/>
    <property type="evidence" value="ECO:0007669"/>
    <property type="project" value="UniProtKB-UniRule"/>
</dbReference>
<dbReference type="FunFam" id="4.10.410.60:FF:000001">
    <property type="entry name" value="50S ribosomal protein L35"/>
    <property type="match status" value="1"/>
</dbReference>
<dbReference type="Gene3D" id="4.10.410.60">
    <property type="match status" value="1"/>
</dbReference>
<dbReference type="HAMAP" id="MF_00514">
    <property type="entry name" value="Ribosomal_bL35"/>
    <property type="match status" value="1"/>
</dbReference>
<dbReference type="InterPro" id="IPR001706">
    <property type="entry name" value="Ribosomal_bL35"/>
</dbReference>
<dbReference type="InterPro" id="IPR021137">
    <property type="entry name" value="Ribosomal_bL35-like"/>
</dbReference>
<dbReference type="InterPro" id="IPR018265">
    <property type="entry name" value="Ribosomal_bL35_CS"/>
</dbReference>
<dbReference type="InterPro" id="IPR037229">
    <property type="entry name" value="Ribosomal_bL35_sf"/>
</dbReference>
<dbReference type="NCBIfam" id="TIGR00001">
    <property type="entry name" value="rpmI_bact"/>
    <property type="match status" value="1"/>
</dbReference>
<dbReference type="PANTHER" id="PTHR33343">
    <property type="entry name" value="54S RIBOSOMAL PROTEIN BL35M"/>
    <property type="match status" value="1"/>
</dbReference>
<dbReference type="PANTHER" id="PTHR33343:SF1">
    <property type="entry name" value="LARGE RIBOSOMAL SUBUNIT PROTEIN BL35M"/>
    <property type="match status" value="1"/>
</dbReference>
<dbReference type="Pfam" id="PF01632">
    <property type="entry name" value="Ribosomal_L35p"/>
    <property type="match status" value="1"/>
</dbReference>
<dbReference type="PRINTS" id="PR00064">
    <property type="entry name" value="RIBOSOMALL35"/>
</dbReference>
<dbReference type="SUPFAM" id="SSF143034">
    <property type="entry name" value="L35p-like"/>
    <property type="match status" value="1"/>
</dbReference>
<dbReference type="PROSITE" id="PS00936">
    <property type="entry name" value="RIBOSOMAL_L35"/>
    <property type="match status" value="1"/>
</dbReference>
<protein>
    <recommendedName>
        <fullName evidence="1">Large ribosomal subunit protein bL35</fullName>
    </recommendedName>
    <alternativeName>
        <fullName evidence="2">50S ribosomal protein L35</fullName>
    </alternativeName>
</protein>
<evidence type="ECO:0000255" key="1">
    <source>
        <dbReference type="HAMAP-Rule" id="MF_00514"/>
    </source>
</evidence>
<evidence type="ECO:0000305" key="2"/>
<keyword id="KW-1185">Reference proteome</keyword>
<keyword id="KW-0687">Ribonucleoprotein</keyword>
<keyword id="KW-0689">Ribosomal protein</keyword>
<proteinExistence type="inferred from homology"/>
<accession>Q3ABS8</accession>
<sequence>MPKIKTKKAAAKRFKKTGSGKVKHFHAFHSHLLGHKTSKRKRRLRKSAIVSKGDMKIIKKILPY</sequence>
<organism>
    <name type="scientific">Carboxydothermus hydrogenoformans (strain ATCC BAA-161 / DSM 6008 / Z-2901)</name>
    <dbReference type="NCBI Taxonomy" id="246194"/>
    <lineage>
        <taxon>Bacteria</taxon>
        <taxon>Bacillati</taxon>
        <taxon>Bacillota</taxon>
        <taxon>Clostridia</taxon>
        <taxon>Thermoanaerobacterales</taxon>
        <taxon>Thermoanaerobacteraceae</taxon>
        <taxon>Carboxydothermus</taxon>
    </lineage>
</organism>
<reference key="1">
    <citation type="journal article" date="2005" name="PLoS Genet.">
        <title>Life in hot carbon monoxide: the complete genome sequence of Carboxydothermus hydrogenoformans Z-2901.</title>
        <authorList>
            <person name="Wu M."/>
            <person name="Ren Q."/>
            <person name="Durkin A.S."/>
            <person name="Daugherty S.C."/>
            <person name="Brinkac L.M."/>
            <person name="Dodson R.J."/>
            <person name="Madupu R."/>
            <person name="Sullivan S.A."/>
            <person name="Kolonay J.F."/>
            <person name="Nelson W.C."/>
            <person name="Tallon L.J."/>
            <person name="Jones K.M."/>
            <person name="Ulrich L.E."/>
            <person name="Gonzalez J.M."/>
            <person name="Zhulin I.B."/>
            <person name="Robb F.T."/>
            <person name="Eisen J.A."/>
        </authorList>
    </citation>
    <scope>NUCLEOTIDE SEQUENCE [LARGE SCALE GENOMIC DNA]</scope>
    <source>
        <strain>ATCC BAA-161 / DSM 6008 / Z-2901</strain>
    </source>
</reference>
<name>RL35_CARHZ</name>
<feature type="chain" id="PRO_0000258654" description="Large ribosomal subunit protein bL35">
    <location>
        <begin position="1"/>
        <end position="64"/>
    </location>
</feature>